<feature type="signal peptide" evidence="3">
    <location>
        <begin position="1"/>
        <end status="unknown"/>
    </location>
</feature>
<feature type="chain" id="PRO_0000032950" description="Placental prolactin-related protein 2">
    <location>
        <begin status="unknown"/>
        <end position="267"/>
    </location>
</feature>
<feature type="glycosylation site" description="N-linked (GlcNAc...) asparagine" evidence="2">
    <location>
        <position position="99"/>
    </location>
</feature>
<feature type="glycosylation site" description="N-linked (GlcNAc...) asparagine" evidence="2">
    <location>
        <position position="121"/>
    </location>
</feature>
<feature type="disulfide bond" evidence="1">
    <location>
        <begin position="126"/>
        <end position="244"/>
    </location>
</feature>
<feature type="disulfide bond" evidence="1">
    <location>
        <begin position="261"/>
        <end position="267"/>
    </location>
</feature>
<gene>
    <name type="primary">PRP2</name>
</gene>
<accession>P12401</accession>
<comment type="function">
    <text>Placental prolactin-related proteins may play a specific role during gestation.</text>
</comment>
<comment type="subcellular location">
    <subcellularLocation>
        <location>Secreted</location>
    </subcellularLocation>
</comment>
<comment type="similarity">
    <text evidence="4">Belongs to the somatotropin/prolactin family.</text>
</comment>
<evidence type="ECO:0000250" key="1"/>
<evidence type="ECO:0000250" key="2">
    <source>
        <dbReference type="UniProtKB" id="P05402"/>
    </source>
</evidence>
<evidence type="ECO:0000255" key="3"/>
<evidence type="ECO:0000305" key="4"/>
<sequence>MVETRLGWEAGGGLGAPGGPGGKLGGLGLAVGGTHSWSGLLKRVDRREARAQPRLLVLGCLLCQGISCPSCGPDMFVSLQKSLIDVFINAASLSHDFHNLSTIMFNEFDEKYAQGKLYYINATKSCHTNSFHTPEERDKAQQMNNEDLSKWTLVLLYSWNNPLYYLLLELRNMKNLSEAVISSAMEIENMSEKLQAFIESQFRKIIVPVLKMIHEVSNTWSRFSSMTFSDEDRSISEYYNLFYCLRRDSRKVDMYIKILTCRTRKTC</sequence>
<name>PLRP2_BOVIN</name>
<protein>
    <recommendedName>
        <fullName>Placental prolactin-related protein 2</fullName>
        <shortName>PRC-II</shortName>
    </recommendedName>
    <alternativeName>
        <fullName>bPRCII</fullName>
    </alternativeName>
</protein>
<dbReference type="EMBL" id="M27239">
    <property type="protein sequence ID" value="AAA30728.1"/>
    <property type="molecule type" value="mRNA"/>
</dbReference>
<dbReference type="PIR" id="A34078">
    <property type="entry name" value="A34078"/>
</dbReference>
<dbReference type="SMR" id="P12401"/>
<dbReference type="GlyCosmos" id="P12401">
    <property type="glycosylation" value="2 sites, No reported glycans"/>
</dbReference>
<dbReference type="GlyGen" id="P12401">
    <property type="glycosylation" value="2 sites"/>
</dbReference>
<dbReference type="InParanoid" id="P12401"/>
<dbReference type="OrthoDB" id="9946219at2759"/>
<dbReference type="Proteomes" id="UP000009136">
    <property type="component" value="Unplaced"/>
</dbReference>
<dbReference type="GO" id="GO:0005615">
    <property type="term" value="C:extracellular space"/>
    <property type="evidence" value="ECO:0000318"/>
    <property type="project" value="GO_Central"/>
</dbReference>
<dbReference type="GO" id="GO:0005179">
    <property type="term" value="F:hormone activity"/>
    <property type="evidence" value="ECO:0000318"/>
    <property type="project" value="GO_Central"/>
</dbReference>
<dbReference type="GO" id="GO:0005148">
    <property type="term" value="F:prolactin receptor binding"/>
    <property type="evidence" value="ECO:0000318"/>
    <property type="project" value="GO_Central"/>
</dbReference>
<dbReference type="GO" id="GO:0007166">
    <property type="term" value="P:cell surface receptor signaling pathway"/>
    <property type="evidence" value="ECO:0000318"/>
    <property type="project" value="GO_Central"/>
</dbReference>
<dbReference type="GO" id="GO:0007565">
    <property type="term" value="P:female pregnancy"/>
    <property type="evidence" value="ECO:0000318"/>
    <property type="project" value="GO_Central"/>
</dbReference>
<dbReference type="GO" id="GO:0030879">
    <property type="term" value="P:mammary gland development"/>
    <property type="evidence" value="ECO:0000318"/>
    <property type="project" value="GO_Central"/>
</dbReference>
<dbReference type="GO" id="GO:0009891">
    <property type="term" value="P:positive regulation of biosynthetic process"/>
    <property type="evidence" value="ECO:0007669"/>
    <property type="project" value="UniProtKB-ARBA"/>
</dbReference>
<dbReference type="GO" id="GO:1903489">
    <property type="term" value="P:positive regulation of lactation"/>
    <property type="evidence" value="ECO:0000318"/>
    <property type="project" value="GO_Central"/>
</dbReference>
<dbReference type="GO" id="GO:0046427">
    <property type="term" value="P:positive regulation of receptor signaling pathway via JAK-STAT"/>
    <property type="evidence" value="ECO:0000318"/>
    <property type="project" value="GO_Central"/>
</dbReference>
<dbReference type="GO" id="GO:0031667">
    <property type="term" value="P:response to nutrient levels"/>
    <property type="evidence" value="ECO:0000318"/>
    <property type="project" value="GO_Central"/>
</dbReference>
<dbReference type="CDD" id="cd10288">
    <property type="entry name" value="prolactin_like"/>
    <property type="match status" value="1"/>
</dbReference>
<dbReference type="FunFam" id="1.20.1250.10:FF:000039">
    <property type="entry name" value="Placental prolactin-related protein 2"/>
    <property type="match status" value="1"/>
</dbReference>
<dbReference type="Gene3D" id="1.20.1250.10">
    <property type="match status" value="1"/>
</dbReference>
<dbReference type="InterPro" id="IPR009079">
    <property type="entry name" value="4_helix_cytokine-like_core"/>
</dbReference>
<dbReference type="InterPro" id="IPR001400">
    <property type="entry name" value="Somatotropin/Prolactin"/>
</dbReference>
<dbReference type="InterPro" id="IPR018116">
    <property type="entry name" value="Somatotropin_CS"/>
</dbReference>
<dbReference type="PANTHER" id="PTHR11417:SF5">
    <property type="entry name" value="PROLACTIN"/>
    <property type="match status" value="1"/>
</dbReference>
<dbReference type="PANTHER" id="PTHR11417">
    <property type="entry name" value="SOMATOTROPIN,PROLACTIN"/>
    <property type="match status" value="1"/>
</dbReference>
<dbReference type="Pfam" id="PF00103">
    <property type="entry name" value="Hormone_1"/>
    <property type="match status" value="1"/>
</dbReference>
<dbReference type="PRINTS" id="PR00836">
    <property type="entry name" value="SOMATOTROPIN"/>
</dbReference>
<dbReference type="SUPFAM" id="SSF47266">
    <property type="entry name" value="4-helical cytokines"/>
    <property type="match status" value="1"/>
</dbReference>
<dbReference type="PROSITE" id="PS00266">
    <property type="entry name" value="SOMATOTROPIN_1"/>
    <property type="match status" value="1"/>
</dbReference>
<dbReference type="PROSITE" id="PS00338">
    <property type="entry name" value="SOMATOTROPIN_2"/>
    <property type="match status" value="1"/>
</dbReference>
<proteinExistence type="evidence at transcript level"/>
<keyword id="KW-1015">Disulfide bond</keyword>
<keyword id="KW-0325">Glycoprotein</keyword>
<keyword id="KW-0372">Hormone</keyword>
<keyword id="KW-1185">Reference proteome</keyword>
<keyword id="KW-0964">Secreted</keyword>
<keyword id="KW-0732">Signal</keyword>
<organism>
    <name type="scientific">Bos taurus</name>
    <name type="common">Bovine</name>
    <dbReference type="NCBI Taxonomy" id="9913"/>
    <lineage>
        <taxon>Eukaryota</taxon>
        <taxon>Metazoa</taxon>
        <taxon>Chordata</taxon>
        <taxon>Craniata</taxon>
        <taxon>Vertebrata</taxon>
        <taxon>Euteleostomi</taxon>
        <taxon>Mammalia</taxon>
        <taxon>Eutheria</taxon>
        <taxon>Laurasiatheria</taxon>
        <taxon>Artiodactyla</taxon>
        <taxon>Ruminantia</taxon>
        <taxon>Pecora</taxon>
        <taxon>Bovidae</taxon>
        <taxon>Bovinae</taxon>
        <taxon>Bos</taxon>
    </lineage>
</organism>
<reference key="1">
    <citation type="journal article" date="1989" name="Biochemistry">
        <title>A subfamily of bovine prolactin-related transcripts distinct from placental lactogen in the fetal placenta.</title>
        <authorList>
            <person name="Kessler M.A."/>
            <person name="Milosavljevic M."/>
            <person name="Zieler C.G."/>
            <person name="Schuler L.A."/>
        </authorList>
    </citation>
    <scope>NUCLEOTIDE SEQUENCE [MRNA]</scope>
    <source>
        <tissue>Placenta</tissue>
    </source>
</reference>